<gene>
    <name type="primary">TPN1</name>
</gene>
<sequence length="579" mass="64560">MNRDNMDTTKRKEDHTKHTTDVIEFYEEGTAASSLNIATEKANSSPSILRRIINRAAWLSKKVDAMGVESTGIQRISPYERGTSKKQFLHVAGLWLSATGGLSSMSSFLLGPLLFGLSFRESLASSLISVTIGCLIAAYCSIMGPQSGCRQMVTARYLFGWWFVKLVALASIIGVMGWSVVNSVVGGEMLAAISNDKVPLWVGIVIVTVCSFLVAIFGIKQVIKVETYLSVPVLTAFLLLYISSSDKYSFVNAYVSKGNLDSSTRKGNWMSFFSLCYSITATWGSITADYYILFPEDTPYIQIFCLTFFGTFLPTCFVGILGLLLASVAMSYKPWSVEYDSHGMGGLLWAGFQRWNGFGKFCVVVLVFSLVSNNIINTYSAAFSIQLSSVFCAKIPRWFWSIVCTIICLVCALIGRNHFSTILGNFLPMIGYWISMYFILLFEENLVFRRFFLHLYTKEFPTVTGEINGPELVGSSKEVEKDAVTNIHLLKRKHKVTKHRYNWDKWEDYEVLTHGYAATFAFIVGVAGVVVGMAQAYWIGPIAAKFGEYGGDVAMWLSMAFSGVVYPPCRYLELRKFGR</sequence>
<protein>
    <recommendedName>
        <fullName>Vitamin B6 transporter TPN1</fullName>
    </recommendedName>
    <alternativeName>
        <fullName>Transport of pyridoxine protein 1</fullName>
    </alternativeName>
</protein>
<reference key="1">
    <citation type="journal article" date="2003" name="J. Biol. Chem.">
        <title>Tpn1p, the plasma membrane vitamin B6 transporter of Saccharomyces cerevisiae.</title>
        <authorList>
            <person name="Stolz J."/>
            <person name="Vielreicher M."/>
        </authorList>
    </citation>
    <scope>NUCLEOTIDE SEQUENCE [GENOMIC DNA]</scope>
    <source>
        <strain>4228 / ATCC 9080 / CBS 2354 / DSM 70424 / NBRC 0565 / NCYC 74 / NRRL Y-1089</strain>
    </source>
</reference>
<comment type="function">
    <text evidence="1">Thiamine-regulated, high affinity import carrier of pyridoxine, pyridoxal and pyridoxamine.</text>
</comment>
<comment type="subcellular location">
    <subcellularLocation>
        <location evidence="3">Membrane</location>
        <topology evidence="3">Multi-pass membrane protein</topology>
    </subcellularLocation>
</comment>
<comment type="similarity">
    <text evidence="3">Belongs to the purine-cytosine permease (2.A.39) family.</text>
</comment>
<organism>
    <name type="scientific">Saccharomyces cerevisiae</name>
    <name type="common">Baker's yeast</name>
    <dbReference type="NCBI Taxonomy" id="4932"/>
    <lineage>
        <taxon>Eukaryota</taxon>
        <taxon>Fungi</taxon>
        <taxon>Dikarya</taxon>
        <taxon>Ascomycota</taxon>
        <taxon>Saccharomycotina</taxon>
        <taxon>Saccharomycetes</taxon>
        <taxon>Saccharomycetales</taxon>
        <taxon>Saccharomycetaceae</taxon>
        <taxon>Saccharomyces</taxon>
    </lineage>
</organism>
<name>TPN1_YEASX</name>
<evidence type="ECO:0000250" key="1"/>
<evidence type="ECO:0000255" key="2"/>
<evidence type="ECO:0000305" key="3"/>
<keyword id="KW-0472">Membrane</keyword>
<keyword id="KW-0812">Transmembrane</keyword>
<keyword id="KW-1133">Transmembrane helix</keyword>
<keyword id="KW-0813">Transport</keyword>
<dbReference type="EMBL" id="AY216467">
    <property type="protein sequence ID" value="AAO73409.1"/>
    <property type="molecule type" value="Genomic_DNA"/>
</dbReference>
<dbReference type="VEuPathDB" id="FungiDB:YGL186C"/>
<dbReference type="OrthoDB" id="5428495at2759"/>
<dbReference type="GO" id="GO:0000329">
    <property type="term" value="C:fungal-type vacuole membrane"/>
    <property type="evidence" value="ECO:0007669"/>
    <property type="project" value="TreeGrafter"/>
</dbReference>
<dbReference type="GO" id="GO:0005886">
    <property type="term" value="C:plasma membrane"/>
    <property type="evidence" value="ECO:0007669"/>
    <property type="project" value="TreeGrafter"/>
</dbReference>
<dbReference type="GO" id="GO:0022857">
    <property type="term" value="F:transmembrane transporter activity"/>
    <property type="evidence" value="ECO:0007669"/>
    <property type="project" value="InterPro"/>
</dbReference>
<dbReference type="CDD" id="cd11484">
    <property type="entry name" value="SLC-NCS1sbd_CobB-like"/>
    <property type="match status" value="1"/>
</dbReference>
<dbReference type="FunFam" id="1.10.4160.10:FF:000007">
    <property type="entry name" value="Pyridoxine transporter"/>
    <property type="match status" value="1"/>
</dbReference>
<dbReference type="Gene3D" id="1.10.4160.10">
    <property type="entry name" value="Hydantoin permease"/>
    <property type="match status" value="1"/>
</dbReference>
<dbReference type="InterPro" id="IPR012681">
    <property type="entry name" value="NCS1"/>
</dbReference>
<dbReference type="InterPro" id="IPR001248">
    <property type="entry name" value="Pur-cyt_permease"/>
</dbReference>
<dbReference type="InterPro" id="IPR026030">
    <property type="entry name" value="Pur-cyt_permease_Fcy2/21/22"/>
</dbReference>
<dbReference type="NCBIfam" id="TIGR00800">
    <property type="entry name" value="ncs1"/>
    <property type="match status" value="1"/>
</dbReference>
<dbReference type="PANTHER" id="PTHR31806">
    <property type="entry name" value="PURINE-CYTOSINE PERMEASE FCY2-RELATED"/>
    <property type="match status" value="1"/>
</dbReference>
<dbReference type="PANTHER" id="PTHR31806:SF17">
    <property type="entry name" value="VITAMIN B6 TRANSPORTER TPN1"/>
    <property type="match status" value="1"/>
</dbReference>
<dbReference type="Pfam" id="PF02133">
    <property type="entry name" value="Transp_cyt_pur"/>
    <property type="match status" value="1"/>
</dbReference>
<dbReference type="PIRSF" id="PIRSF002744">
    <property type="entry name" value="Pur-cyt_permease"/>
    <property type="match status" value="1"/>
</dbReference>
<accession>Q874L4</accession>
<proteinExistence type="inferred from homology"/>
<feature type="chain" id="PRO_0000228845" description="Vitamin B6 transporter TPN1">
    <location>
        <begin position="1"/>
        <end position="579"/>
    </location>
</feature>
<feature type="transmembrane region" description="Helical" evidence="2">
    <location>
        <begin position="99"/>
        <end position="119"/>
    </location>
</feature>
<feature type="transmembrane region" description="Helical" evidence="2">
    <location>
        <begin position="123"/>
        <end position="143"/>
    </location>
</feature>
<feature type="transmembrane region" description="Helical" evidence="2">
    <location>
        <begin position="158"/>
        <end position="178"/>
    </location>
</feature>
<feature type="transmembrane region" description="Helical" evidence="2">
    <location>
        <begin position="199"/>
        <end position="219"/>
    </location>
</feature>
<feature type="transmembrane region" description="Helical" evidence="2">
    <location>
        <begin position="222"/>
        <end position="242"/>
    </location>
</feature>
<feature type="transmembrane region" description="Helical" evidence="2">
    <location>
        <begin position="275"/>
        <end position="295"/>
    </location>
</feature>
<feature type="transmembrane region" description="Helical" evidence="2">
    <location>
        <begin position="303"/>
        <end position="323"/>
    </location>
</feature>
<feature type="transmembrane region" description="Helical" evidence="2">
    <location>
        <begin position="363"/>
        <end position="383"/>
    </location>
</feature>
<feature type="transmembrane region" description="Helical" evidence="2">
    <location>
        <begin position="395"/>
        <end position="415"/>
    </location>
</feature>
<feature type="transmembrane region" description="Helical" evidence="2">
    <location>
        <begin position="422"/>
        <end position="442"/>
    </location>
</feature>
<feature type="transmembrane region" description="Helical" evidence="2">
    <location>
        <begin position="520"/>
        <end position="540"/>
    </location>
</feature>
<feature type="transmembrane region" description="Helical" evidence="2">
    <location>
        <begin position="546"/>
        <end position="566"/>
    </location>
</feature>